<comment type="function">
    <text evidence="1">Removes the formyl group from the N-terminal Met of newly synthesized proteins. Requires at least a dipeptide for an efficient rate of reaction. N-terminal L-methionine is a prerequisite for activity but the enzyme has broad specificity at other positions.</text>
</comment>
<comment type="catalytic activity">
    <reaction evidence="1">
        <text>N-terminal N-formyl-L-methionyl-[peptide] + H2O = N-terminal L-methionyl-[peptide] + formate</text>
        <dbReference type="Rhea" id="RHEA:24420"/>
        <dbReference type="Rhea" id="RHEA-COMP:10639"/>
        <dbReference type="Rhea" id="RHEA-COMP:10640"/>
        <dbReference type="ChEBI" id="CHEBI:15377"/>
        <dbReference type="ChEBI" id="CHEBI:15740"/>
        <dbReference type="ChEBI" id="CHEBI:49298"/>
        <dbReference type="ChEBI" id="CHEBI:64731"/>
        <dbReference type="EC" id="3.5.1.88"/>
    </reaction>
</comment>
<comment type="cofactor">
    <cofactor evidence="1">
        <name>Fe(2+)</name>
        <dbReference type="ChEBI" id="CHEBI:29033"/>
    </cofactor>
    <text evidence="1">Binds 1 Fe(2+) ion.</text>
</comment>
<comment type="similarity">
    <text evidence="1">Belongs to the polypeptide deformylase family.</text>
</comment>
<evidence type="ECO:0000255" key="1">
    <source>
        <dbReference type="HAMAP-Rule" id="MF_00163"/>
    </source>
</evidence>
<feature type="chain" id="PRO_0000301112" description="Peptide deformylase">
    <location>
        <begin position="1"/>
        <end position="204"/>
    </location>
</feature>
<feature type="active site" evidence="1">
    <location>
        <position position="175"/>
    </location>
</feature>
<feature type="binding site" evidence="1">
    <location>
        <position position="131"/>
    </location>
    <ligand>
        <name>Fe cation</name>
        <dbReference type="ChEBI" id="CHEBI:24875"/>
    </ligand>
</feature>
<feature type="binding site" evidence="1">
    <location>
        <position position="174"/>
    </location>
    <ligand>
        <name>Fe cation</name>
        <dbReference type="ChEBI" id="CHEBI:24875"/>
    </ligand>
</feature>
<feature type="binding site" evidence="1">
    <location>
        <position position="178"/>
    </location>
    <ligand>
        <name>Fe cation</name>
        <dbReference type="ChEBI" id="CHEBI:24875"/>
    </ligand>
</feature>
<protein>
    <recommendedName>
        <fullName evidence="1">Peptide deformylase</fullName>
        <shortName evidence="1">PDF</shortName>
        <ecNumber evidence="1">3.5.1.88</ecNumber>
    </recommendedName>
    <alternativeName>
        <fullName evidence="1">Polypeptide deformylase</fullName>
    </alternativeName>
</protein>
<proteinExistence type="inferred from homology"/>
<dbReference type="EC" id="3.5.1.88" evidence="1"/>
<dbReference type="EMBL" id="CP000419">
    <property type="protein sequence ID" value="ABJ65526.1"/>
    <property type="molecule type" value="Genomic_DNA"/>
</dbReference>
<dbReference type="RefSeq" id="WP_011225356.1">
    <property type="nucleotide sequence ID" value="NC_008532.1"/>
</dbReference>
<dbReference type="SMR" id="Q03MP6"/>
<dbReference type="GeneID" id="66898095"/>
<dbReference type="KEGG" id="ste:STER_0205"/>
<dbReference type="HOGENOM" id="CLU_061901_4_0_9"/>
<dbReference type="GO" id="GO:0046872">
    <property type="term" value="F:metal ion binding"/>
    <property type="evidence" value="ECO:0007669"/>
    <property type="project" value="UniProtKB-KW"/>
</dbReference>
<dbReference type="GO" id="GO:0042586">
    <property type="term" value="F:peptide deformylase activity"/>
    <property type="evidence" value="ECO:0007669"/>
    <property type="project" value="UniProtKB-UniRule"/>
</dbReference>
<dbReference type="GO" id="GO:0043686">
    <property type="term" value="P:co-translational protein modification"/>
    <property type="evidence" value="ECO:0007669"/>
    <property type="project" value="TreeGrafter"/>
</dbReference>
<dbReference type="GO" id="GO:0006412">
    <property type="term" value="P:translation"/>
    <property type="evidence" value="ECO:0007669"/>
    <property type="project" value="UniProtKB-UniRule"/>
</dbReference>
<dbReference type="CDD" id="cd00487">
    <property type="entry name" value="Pep_deformylase"/>
    <property type="match status" value="1"/>
</dbReference>
<dbReference type="FunFam" id="3.90.45.10:FF:000002">
    <property type="entry name" value="Peptide deformylase"/>
    <property type="match status" value="1"/>
</dbReference>
<dbReference type="Gene3D" id="3.90.45.10">
    <property type="entry name" value="Peptide deformylase"/>
    <property type="match status" value="1"/>
</dbReference>
<dbReference type="HAMAP" id="MF_00163">
    <property type="entry name" value="Pep_deformylase"/>
    <property type="match status" value="1"/>
</dbReference>
<dbReference type="InterPro" id="IPR023635">
    <property type="entry name" value="Peptide_deformylase"/>
</dbReference>
<dbReference type="InterPro" id="IPR036821">
    <property type="entry name" value="Peptide_deformylase_sf"/>
</dbReference>
<dbReference type="NCBIfam" id="TIGR00079">
    <property type="entry name" value="pept_deformyl"/>
    <property type="match status" value="1"/>
</dbReference>
<dbReference type="PANTHER" id="PTHR10458">
    <property type="entry name" value="PEPTIDE DEFORMYLASE"/>
    <property type="match status" value="1"/>
</dbReference>
<dbReference type="PANTHER" id="PTHR10458:SF8">
    <property type="entry name" value="PEPTIDE DEFORMYLASE 2"/>
    <property type="match status" value="1"/>
</dbReference>
<dbReference type="Pfam" id="PF01327">
    <property type="entry name" value="Pep_deformylase"/>
    <property type="match status" value="1"/>
</dbReference>
<dbReference type="PIRSF" id="PIRSF004749">
    <property type="entry name" value="Pep_def"/>
    <property type="match status" value="1"/>
</dbReference>
<dbReference type="PRINTS" id="PR01576">
    <property type="entry name" value="PDEFORMYLASE"/>
</dbReference>
<dbReference type="SUPFAM" id="SSF56420">
    <property type="entry name" value="Peptide deformylase"/>
    <property type="match status" value="1"/>
</dbReference>
<organism>
    <name type="scientific">Streptococcus thermophilus (strain ATCC BAA-491 / LMD-9)</name>
    <dbReference type="NCBI Taxonomy" id="322159"/>
    <lineage>
        <taxon>Bacteria</taxon>
        <taxon>Bacillati</taxon>
        <taxon>Bacillota</taxon>
        <taxon>Bacilli</taxon>
        <taxon>Lactobacillales</taxon>
        <taxon>Streptococcaceae</taxon>
        <taxon>Streptococcus</taxon>
    </lineage>
</organism>
<keyword id="KW-0378">Hydrolase</keyword>
<keyword id="KW-0408">Iron</keyword>
<keyword id="KW-0479">Metal-binding</keyword>
<keyword id="KW-0648">Protein biosynthesis</keyword>
<name>DEF_STRTD</name>
<reference key="1">
    <citation type="journal article" date="2006" name="Proc. Natl. Acad. Sci. U.S.A.">
        <title>Comparative genomics of the lactic acid bacteria.</title>
        <authorList>
            <person name="Makarova K.S."/>
            <person name="Slesarev A."/>
            <person name="Wolf Y.I."/>
            <person name="Sorokin A."/>
            <person name="Mirkin B."/>
            <person name="Koonin E.V."/>
            <person name="Pavlov A."/>
            <person name="Pavlova N."/>
            <person name="Karamychev V."/>
            <person name="Polouchine N."/>
            <person name="Shakhova V."/>
            <person name="Grigoriev I."/>
            <person name="Lou Y."/>
            <person name="Rohksar D."/>
            <person name="Lucas S."/>
            <person name="Huang K."/>
            <person name="Goodstein D.M."/>
            <person name="Hawkins T."/>
            <person name="Plengvidhya V."/>
            <person name="Welker D."/>
            <person name="Hughes J."/>
            <person name="Goh Y."/>
            <person name="Benson A."/>
            <person name="Baldwin K."/>
            <person name="Lee J.-H."/>
            <person name="Diaz-Muniz I."/>
            <person name="Dosti B."/>
            <person name="Smeianov V."/>
            <person name="Wechter W."/>
            <person name="Barabote R."/>
            <person name="Lorca G."/>
            <person name="Altermann E."/>
            <person name="Barrangou R."/>
            <person name="Ganesan B."/>
            <person name="Xie Y."/>
            <person name="Rawsthorne H."/>
            <person name="Tamir D."/>
            <person name="Parker C."/>
            <person name="Breidt F."/>
            <person name="Broadbent J.R."/>
            <person name="Hutkins R."/>
            <person name="O'Sullivan D."/>
            <person name="Steele J."/>
            <person name="Unlu G."/>
            <person name="Saier M.H. Jr."/>
            <person name="Klaenhammer T."/>
            <person name="Richardson P."/>
            <person name="Kozyavkin S."/>
            <person name="Weimer B.C."/>
            <person name="Mills D.A."/>
        </authorList>
    </citation>
    <scope>NUCLEOTIDE SEQUENCE [LARGE SCALE GENOMIC DNA]</scope>
    <source>
        <strain>ATCC BAA-491 / LMD-9</strain>
    </source>
</reference>
<accession>Q03MP6</accession>
<sequence>MDAQTKIIRASHMIDMNDIIREGNPTLRAVAEDVTLPLSDEDIILGEKMMQFLRNSQDPVIAEKMGLRGGVGLAAPQLDISKRIIAVLVPNPEDAKGNPPKEAYSLQEIMYNPKVVAHSVQEAALGNGEGCLSVDRDVPGYVVRHARVTIEYFNKEGEKKRIKLRGYDSIVVQHEIDHTNGIMFYDRINKDNPFTIKDGLLIIE</sequence>
<gene>
    <name evidence="1" type="primary">def</name>
    <name type="ordered locus">STER_0205</name>
</gene>